<sequence length="100" mass="11463">MLSSVALRYLLVLSLAFLAVVTSSRTQSRFASYELMGTEGTECVTTKTISQICYQCATRHEDSFVQVYQECCKKEMGLREYCEEIYTELPIRSGLWQPNK</sequence>
<dbReference type="EMBL" id="X73157">
    <property type="protein sequence ID" value="CAA51680.1"/>
    <property type="molecule type" value="mRNA"/>
</dbReference>
<dbReference type="PIR" id="S34772">
    <property type="entry name" value="S34772"/>
</dbReference>
<dbReference type="SMR" id="P42579"/>
<dbReference type="GO" id="GO:0005179">
    <property type="term" value="F:hormone activity"/>
    <property type="evidence" value="ECO:0007669"/>
    <property type="project" value="UniProtKB-KW"/>
</dbReference>
<comment type="function">
    <text>Stimulates integumental Na(+) uptake. Controls the activity of sodium pumps in the integument, pericardium, ureter and nephridial gland.</text>
</comment>
<comment type="tissue specificity">
    <text>Expressed by the yellow cells, peptidergic (neuroendocrine) neurons of the central nervous system.</text>
</comment>
<comment type="PTM">
    <text evidence="2">Three disulfide bonds are present.</text>
</comment>
<name>SIS_LYMST</name>
<organism>
    <name type="scientific">Lymnaea stagnalis</name>
    <name type="common">Great pond snail</name>
    <name type="synonym">Helix stagnalis</name>
    <dbReference type="NCBI Taxonomy" id="6523"/>
    <lineage>
        <taxon>Eukaryota</taxon>
        <taxon>Metazoa</taxon>
        <taxon>Spiralia</taxon>
        <taxon>Lophotrochozoa</taxon>
        <taxon>Mollusca</taxon>
        <taxon>Gastropoda</taxon>
        <taxon>Heterobranchia</taxon>
        <taxon>Euthyneura</taxon>
        <taxon>Panpulmonata</taxon>
        <taxon>Hygrophila</taxon>
        <taxon>Lymnaeoidea</taxon>
        <taxon>Lymnaeidae</taxon>
        <taxon>Lymnaea</taxon>
    </lineage>
</organism>
<keyword id="KW-0903">Direct protein sequencing</keyword>
<keyword id="KW-1015">Disulfide bond</keyword>
<keyword id="KW-0372">Hormone</keyword>
<keyword id="KW-0732">Signal</keyword>
<reference key="1">
    <citation type="journal article" date="1993" name="Eur. J. Biochem.">
        <title>cDNA cloning of the sodium-influx-stimulating peptide in the mollusc, Lymnaea stagnalis.</title>
        <authorList>
            <person name="Smit A.B."/>
            <person name="Thijsen S.F.T."/>
            <person name="Geraerts W.P.M."/>
        </authorList>
    </citation>
    <scope>NUCLEOTIDE SEQUENCE [MRNA]</scope>
    <source>
        <tissue>Neuron</tissue>
    </source>
</reference>
<reference key="2">
    <citation type="journal article" date="1993" name="Peptides">
        <title>The sodium influx stimulating peptide of the pulmonate freshwater snail Lymnaea stagnalis.</title>
        <authorList>
            <person name="de With N.D."/>
            <person name="van der Schors R.C."/>
            <person name="Boer H.H."/>
            <person name="Ebberink R.H.M."/>
        </authorList>
    </citation>
    <scope>PROTEIN SEQUENCE OF 24-99</scope>
    <source>
        <tissue>CNS</tissue>
    </source>
</reference>
<accession>P42579</accession>
<proteinExistence type="evidence at protein level"/>
<protein>
    <recommendedName>
        <fullName>Sodium-influx-stimulating peptide</fullName>
    </recommendedName>
</protein>
<feature type="signal peptide" evidence="1">
    <location>
        <begin position="1"/>
        <end position="23"/>
    </location>
</feature>
<feature type="chain" id="PRO_0000022348" description="Sodium-influx-stimulating peptide">
    <location>
        <begin position="24"/>
        <end position="100"/>
    </location>
</feature>
<gene>
    <name type="primary">SIS</name>
</gene>
<evidence type="ECO:0000269" key="1">
    <source>
    </source>
</evidence>
<evidence type="ECO:0000305" key="2"/>